<proteinExistence type="inferred from homology"/>
<feature type="transit peptide" description="Chloroplast" evidence="3">
    <location>
        <begin position="1"/>
        <end position="66"/>
    </location>
</feature>
<feature type="chain" id="PRO_0000300856" description="Putative peroxiredoxin Q, chloroplastic">
    <location>
        <begin position="67"/>
        <end position="217"/>
    </location>
</feature>
<feature type="domain" description="Thioredoxin" evidence="4">
    <location>
        <begin position="70"/>
        <end position="217"/>
    </location>
</feature>
<feature type="active site" description="Cysteine sulfenic acid (-SOH) intermediate" evidence="1">
    <location>
        <position position="112"/>
    </location>
</feature>
<feature type="disulfide bond" description="Redox-active" evidence="1">
    <location>
        <begin position="112"/>
        <end position="117"/>
    </location>
</feature>
<protein>
    <recommendedName>
        <fullName>Putative peroxiredoxin Q, chloroplastic</fullName>
        <ecNumber evidence="2">1.11.1.24</ecNumber>
    </recommendedName>
    <alternativeName>
        <fullName>Thioredoxin peroxidase</fullName>
    </alternativeName>
    <alternativeName>
        <fullName evidence="5">Thioredoxin-dependent peroxiredoxin Q</fullName>
    </alternativeName>
</protein>
<sequence>MAFAVSTACRPSLLLPPRQRSSPPRPRPLLCTPSTAAFRRGALSATTTPTPARAALPSTTGRNRIVCGKVSKGSAAPNFTLRDQDGRAVSLSKFKGRPVVVYFYPADETPGCTKQACAFRDSYEKFKKAGAEVIGISGDDAASHKEFKKKYKLPFTLLSDEGNKVRKEWGVPADLFGTLPGRQTYVLDKNGVVQYIYNNQFQPEKHIGETLKILQSL</sequence>
<keyword id="KW-0049">Antioxidant</keyword>
<keyword id="KW-0150">Chloroplast</keyword>
<keyword id="KW-1015">Disulfide bond</keyword>
<keyword id="KW-0560">Oxidoreductase</keyword>
<keyword id="KW-0575">Peroxidase</keyword>
<keyword id="KW-0934">Plastid</keyword>
<keyword id="KW-0676">Redox-active center</keyword>
<keyword id="KW-1185">Reference proteome</keyword>
<keyword id="KW-0793">Thylakoid</keyword>
<keyword id="KW-0809">Transit peptide</keyword>
<gene>
    <name type="ORF">OsI_22010</name>
</gene>
<evidence type="ECO:0000250" key="1">
    <source>
        <dbReference type="UniProtKB" id="P0AE52"/>
    </source>
</evidence>
<evidence type="ECO:0000250" key="2">
    <source>
        <dbReference type="UniProtKB" id="Q9LU86"/>
    </source>
</evidence>
<evidence type="ECO:0000255" key="3"/>
<evidence type="ECO:0000255" key="4">
    <source>
        <dbReference type="PROSITE-ProRule" id="PRU00691"/>
    </source>
</evidence>
<evidence type="ECO:0000305" key="5"/>
<reference key="1">
    <citation type="journal article" date="2005" name="PLoS Biol.">
        <title>The genomes of Oryza sativa: a history of duplications.</title>
        <authorList>
            <person name="Yu J."/>
            <person name="Wang J."/>
            <person name="Lin W."/>
            <person name="Li S."/>
            <person name="Li H."/>
            <person name="Zhou J."/>
            <person name="Ni P."/>
            <person name="Dong W."/>
            <person name="Hu S."/>
            <person name="Zeng C."/>
            <person name="Zhang J."/>
            <person name="Zhang Y."/>
            <person name="Li R."/>
            <person name="Xu Z."/>
            <person name="Li S."/>
            <person name="Li X."/>
            <person name="Zheng H."/>
            <person name="Cong L."/>
            <person name="Lin L."/>
            <person name="Yin J."/>
            <person name="Geng J."/>
            <person name="Li G."/>
            <person name="Shi J."/>
            <person name="Liu J."/>
            <person name="Lv H."/>
            <person name="Li J."/>
            <person name="Wang J."/>
            <person name="Deng Y."/>
            <person name="Ran L."/>
            <person name="Shi X."/>
            <person name="Wang X."/>
            <person name="Wu Q."/>
            <person name="Li C."/>
            <person name="Ren X."/>
            <person name="Wang J."/>
            <person name="Wang X."/>
            <person name="Li D."/>
            <person name="Liu D."/>
            <person name="Zhang X."/>
            <person name="Ji Z."/>
            <person name="Zhao W."/>
            <person name="Sun Y."/>
            <person name="Zhang Z."/>
            <person name="Bao J."/>
            <person name="Han Y."/>
            <person name="Dong L."/>
            <person name="Ji J."/>
            <person name="Chen P."/>
            <person name="Wu S."/>
            <person name="Liu J."/>
            <person name="Xiao Y."/>
            <person name="Bu D."/>
            <person name="Tan J."/>
            <person name="Yang L."/>
            <person name="Ye C."/>
            <person name="Zhang J."/>
            <person name="Xu J."/>
            <person name="Zhou Y."/>
            <person name="Yu Y."/>
            <person name="Zhang B."/>
            <person name="Zhuang S."/>
            <person name="Wei H."/>
            <person name="Liu B."/>
            <person name="Lei M."/>
            <person name="Yu H."/>
            <person name="Li Y."/>
            <person name="Xu H."/>
            <person name="Wei S."/>
            <person name="He X."/>
            <person name="Fang L."/>
            <person name="Zhang Z."/>
            <person name="Zhang Y."/>
            <person name="Huang X."/>
            <person name="Su Z."/>
            <person name="Tong W."/>
            <person name="Li J."/>
            <person name="Tong Z."/>
            <person name="Li S."/>
            <person name="Ye J."/>
            <person name="Wang L."/>
            <person name="Fang L."/>
            <person name="Lei T."/>
            <person name="Chen C.-S."/>
            <person name="Chen H.-C."/>
            <person name="Xu Z."/>
            <person name="Li H."/>
            <person name="Huang H."/>
            <person name="Zhang F."/>
            <person name="Xu H."/>
            <person name="Li N."/>
            <person name="Zhao C."/>
            <person name="Li S."/>
            <person name="Dong L."/>
            <person name="Huang Y."/>
            <person name="Li L."/>
            <person name="Xi Y."/>
            <person name="Qi Q."/>
            <person name="Li W."/>
            <person name="Zhang B."/>
            <person name="Hu W."/>
            <person name="Zhang Y."/>
            <person name="Tian X."/>
            <person name="Jiao Y."/>
            <person name="Liang X."/>
            <person name="Jin J."/>
            <person name="Gao L."/>
            <person name="Zheng W."/>
            <person name="Hao B."/>
            <person name="Liu S.-M."/>
            <person name="Wang W."/>
            <person name="Yuan L."/>
            <person name="Cao M."/>
            <person name="McDermott J."/>
            <person name="Samudrala R."/>
            <person name="Wang J."/>
            <person name="Wong G.K.-S."/>
            <person name="Yang H."/>
        </authorList>
    </citation>
    <scope>NUCLEOTIDE SEQUENCE [LARGE SCALE GENOMIC DNA]</scope>
    <source>
        <strain>cv. 93-11</strain>
    </source>
</reference>
<name>PRXQ_ORYSI</name>
<organism>
    <name type="scientific">Oryza sativa subsp. indica</name>
    <name type="common">Rice</name>
    <dbReference type="NCBI Taxonomy" id="39946"/>
    <lineage>
        <taxon>Eukaryota</taxon>
        <taxon>Viridiplantae</taxon>
        <taxon>Streptophyta</taxon>
        <taxon>Embryophyta</taxon>
        <taxon>Tracheophyta</taxon>
        <taxon>Spermatophyta</taxon>
        <taxon>Magnoliopsida</taxon>
        <taxon>Liliopsida</taxon>
        <taxon>Poales</taxon>
        <taxon>Poaceae</taxon>
        <taxon>BOP clade</taxon>
        <taxon>Oryzoideae</taxon>
        <taxon>Oryzeae</taxon>
        <taxon>Oryzinae</taxon>
        <taxon>Oryza</taxon>
        <taxon>Oryza sativa</taxon>
    </lineage>
</organism>
<comment type="function">
    <text evidence="2">Thiol-specific peroxidase that catalyzes the reduction of hydrogen peroxide and organic hydroperoxides to water and alcohols, respectively. Plays a role in cell protection against oxidative stress by detoxifying peroxides.</text>
</comment>
<comment type="catalytic activity">
    <reaction evidence="2">
        <text>a hydroperoxide + [thioredoxin]-dithiol = an alcohol + [thioredoxin]-disulfide + H2O</text>
        <dbReference type="Rhea" id="RHEA:62620"/>
        <dbReference type="Rhea" id="RHEA-COMP:10698"/>
        <dbReference type="Rhea" id="RHEA-COMP:10700"/>
        <dbReference type="ChEBI" id="CHEBI:15377"/>
        <dbReference type="ChEBI" id="CHEBI:29950"/>
        <dbReference type="ChEBI" id="CHEBI:30879"/>
        <dbReference type="ChEBI" id="CHEBI:35924"/>
        <dbReference type="ChEBI" id="CHEBI:50058"/>
        <dbReference type="EC" id="1.11.1.24"/>
    </reaction>
</comment>
<comment type="subunit">
    <text evidence="2">Monomer.</text>
</comment>
<comment type="subcellular location">
    <subcellularLocation>
        <location evidence="2">Plastid</location>
        <location evidence="2">Chloroplast thylakoid lumen</location>
    </subcellularLocation>
</comment>
<comment type="miscellaneous">
    <text evidence="1">The active site is a conserved redox-active cysteine residue, the peroxidatic cysteine (C(P)), which makes the nucleophilic attack on the peroxide substrate. The peroxide oxidizes the C(P)-SH to cysteine sulfenic acid (C(P)-SOH), which then reacts with another cysteine residue, the resolving cysteine (C(R)), to form a disulfide bridge. The disulfide is subsequently reduced by an appropriate electron donor to complete the catalytic cycle. In this atypical 2-Cys peroxiredoxin, C(R) is present in the same subunit to form an intramolecular disulfide. The disulfide is subsequently reduced by thioredoxin.</text>
</comment>
<comment type="similarity">
    <text evidence="5">Belongs to the peroxiredoxin family. BCP/PrxQ subfamily.</text>
</comment>
<accession>P0C5D4</accession>
<accession>A2YAA1</accession>
<accession>A3B996</accession>
<accession>B8B3N8</accession>
<accession>Q69YA4</accession>
<dbReference type="EC" id="1.11.1.24" evidence="2"/>
<dbReference type="EMBL" id="CM000131">
    <property type="protein sequence ID" value="EEC80167.1"/>
    <property type="molecule type" value="Genomic_DNA"/>
</dbReference>
<dbReference type="SMR" id="P0C5D4"/>
<dbReference type="STRING" id="39946.P0C5D4"/>
<dbReference type="EnsemblPlants" id="BGIOSGA021734-TA">
    <property type="protein sequence ID" value="BGIOSGA021734-PA"/>
    <property type="gene ID" value="BGIOSGA021734"/>
</dbReference>
<dbReference type="Gramene" id="BGIOSGA021734-TA">
    <property type="protein sequence ID" value="BGIOSGA021734-PA"/>
    <property type="gene ID" value="BGIOSGA021734"/>
</dbReference>
<dbReference type="HOGENOM" id="CLU_042529_14_2_1"/>
<dbReference type="OMA" id="CTAQLCD"/>
<dbReference type="Proteomes" id="UP000007015">
    <property type="component" value="Chromosome 6"/>
</dbReference>
<dbReference type="GO" id="GO:0009543">
    <property type="term" value="C:chloroplast thylakoid lumen"/>
    <property type="evidence" value="ECO:0007669"/>
    <property type="project" value="UniProtKB-SubCell"/>
</dbReference>
<dbReference type="GO" id="GO:0009535">
    <property type="term" value="C:chloroplast thylakoid membrane"/>
    <property type="evidence" value="ECO:0007669"/>
    <property type="project" value="TreeGrafter"/>
</dbReference>
<dbReference type="GO" id="GO:0008379">
    <property type="term" value="F:thioredoxin peroxidase activity"/>
    <property type="evidence" value="ECO:0007669"/>
    <property type="project" value="TreeGrafter"/>
</dbReference>
<dbReference type="GO" id="GO:0045454">
    <property type="term" value="P:cell redox homeostasis"/>
    <property type="evidence" value="ECO:0007669"/>
    <property type="project" value="TreeGrafter"/>
</dbReference>
<dbReference type="GO" id="GO:0034599">
    <property type="term" value="P:cellular response to oxidative stress"/>
    <property type="evidence" value="ECO:0007669"/>
    <property type="project" value="TreeGrafter"/>
</dbReference>
<dbReference type="CDD" id="cd03017">
    <property type="entry name" value="PRX_BCP"/>
    <property type="match status" value="1"/>
</dbReference>
<dbReference type="FunFam" id="3.40.30.10:FF:000122">
    <property type="entry name" value="Peroxiredoxin Q chloroplastic"/>
    <property type="match status" value="1"/>
</dbReference>
<dbReference type="Gene3D" id="3.40.30.10">
    <property type="entry name" value="Glutaredoxin"/>
    <property type="match status" value="1"/>
</dbReference>
<dbReference type="InterPro" id="IPR000866">
    <property type="entry name" value="AhpC/TSA"/>
</dbReference>
<dbReference type="InterPro" id="IPR050924">
    <property type="entry name" value="Peroxiredoxin_BCP/PrxQ"/>
</dbReference>
<dbReference type="InterPro" id="IPR036249">
    <property type="entry name" value="Thioredoxin-like_sf"/>
</dbReference>
<dbReference type="InterPro" id="IPR013766">
    <property type="entry name" value="Thioredoxin_domain"/>
</dbReference>
<dbReference type="PANTHER" id="PTHR42801:SF4">
    <property type="entry name" value="AHPC_TSA FAMILY PROTEIN"/>
    <property type="match status" value="1"/>
</dbReference>
<dbReference type="PANTHER" id="PTHR42801">
    <property type="entry name" value="THIOREDOXIN-DEPENDENT PEROXIDE REDUCTASE"/>
    <property type="match status" value="1"/>
</dbReference>
<dbReference type="Pfam" id="PF00578">
    <property type="entry name" value="AhpC-TSA"/>
    <property type="match status" value="1"/>
</dbReference>
<dbReference type="SUPFAM" id="SSF52833">
    <property type="entry name" value="Thioredoxin-like"/>
    <property type="match status" value="1"/>
</dbReference>
<dbReference type="PROSITE" id="PS51352">
    <property type="entry name" value="THIOREDOXIN_2"/>
    <property type="match status" value="1"/>
</dbReference>